<protein>
    <recommendedName>
        <fullName>Protein Bet</fullName>
    </recommendedName>
</protein>
<comment type="function">
    <text evidence="2">May be implicated in the establishment and/or maintenance of viral persistance. Bet is required for viral replication.</text>
</comment>
<comment type="subunit">
    <text evidence="3 5">Bet interacts with host APOBEC3Ca (PubMed:15911774). This interaction does not induce APOBEC3Ca degradation but prevents its dimerization and incorporation into virion (Probable).</text>
</comment>
<comment type="alternative products">
    <event type="alternative splicing"/>
    <isoform>
        <id>O93036-1</id>
        <name>Bet</name>
        <sequence type="displayed"/>
    </isoform>
    <isoform>
        <id>O56862-1</id>
        <name>Bel-1</name>
        <name>Bel1</name>
        <sequence type="external"/>
    </isoform>
    <isoform>
        <id>O93036-2</id>
        <name>Bel-2</name>
        <name>Bel2</name>
        <sequence type="described" ref="VSP_019619"/>
    </isoform>
    <text>The first 31 residues are shared by isoforms Bet and Bel-1, the last 356 residues are shared by isoforms Bet and Bel-2.</text>
</comment>
<keyword id="KW-0025">Alternative splicing</keyword>
<keyword id="KW-1185">Reference proteome</keyword>
<accession>O93036</accession>
<accession>O56863</accession>
<feature type="chain" id="PRO_0000244971" description="Protein Bet">
    <location>
        <begin position="1"/>
        <end position="387"/>
    </location>
</feature>
<feature type="region of interest" description="Disordered" evidence="1">
    <location>
        <begin position="1"/>
        <end position="33"/>
    </location>
</feature>
<feature type="splice variant" id="VSP_019619" description="In isoform Bel-2." evidence="4">
    <location>
        <begin position="1"/>
        <end position="74"/>
    </location>
</feature>
<sequence>MASKYPEEGPITEGVEEDFNSHSTSGLDLTSVGKNPEHPRRILLVLQHLIAYAEATIKKQDVPGPLLPILSPYVMAWDNPQNVVTRLVNLGESWKKYLLSPGWKDCGERDLTMLTRELLVPGIGLVQIAATLTKTYVLMCNGRCITGSRTDPDCDPLFCKLLCWKQNIQDPRECNLEEWCLYSLDPEHDPLWDPKMIVRRHRNLLPYCMRPFLIWMNYISHNPLTQQCIMMKTLNMLWRAQADDPSDVASLYPRVKVFKASHFDIFGSASGNSEERVSWAKENSHRGEYSLLPSSDDEEEEMSEREELLCHINQCQQKLFYPGGTTDVLGMESNVWLTKFVNIKFPKGTKVILPDGRKFIACDPELKPLLQELKFLDRATSESSDSE</sequence>
<reference key="1">
    <citation type="journal article" date="1997" name="J. Virol.">
        <title>Characterization of the genome of feline foamy virus and its proteins shows distinct features different from those of primate Spumaviruses.</title>
        <authorList>
            <person name="Winkler I."/>
            <person name="Bodem J."/>
            <person name="Haas L."/>
            <person name="Zemba M."/>
            <person name="Delius H."/>
            <person name="Flower R."/>
            <person name="Fluegel R.M."/>
            <person name="Loechelt M."/>
        </authorList>
    </citation>
    <scope>NUCLEOTIDE SEQUENCE [GENOMIC DNA] (ISOFORM BEL-2)</scope>
</reference>
<reference key="2">
    <citation type="journal article" date="1998" name="Virology">
        <title>Detection of subgenomic cDNAs and mapping of feline foamy virus mRNAs reveals complex patterns of transcription.</title>
        <authorList>
            <person name="Bodem J."/>
            <person name="Loechelt M."/>
            <person name="Delius H."/>
            <person name="Fluegel R.M."/>
        </authorList>
    </citation>
    <scope>NUCLEOTIDE SEQUENCE [GENOMIC RNA] (ISOFORM BET)</scope>
    <source>
        <strain>Isolate FUV</strain>
    </source>
</reference>
<reference key="3">
    <citation type="journal article" date="2001" name="Virology">
        <title>The bet gene of feline foamy virus is required for virus replication.</title>
        <authorList>
            <person name="Alke A."/>
            <person name="Schwantes A."/>
            <person name="Kido K."/>
            <person name="Floetenmeyer M."/>
            <person name="Fluegel R.M."/>
            <person name="Loechelt M."/>
        </authorList>
    </citation>
    <scope>FUNCTION OF BET AND BEL-2</scope>
    <source>
        <strain>Isolate FUV</strain>
    </source>
</reference>
<reference key="4">
    <citation type="journal article" date="2005" name="Proc. Natl. Acad. Sci. U.S.A.">
        <title>The antiretroviral activity of APOBEC3 is inhibited by the foamy virus accessory Bet protein.</title>
        <authorList>
            <person name="Loechelt M."/>
            <person name="Romen F."/>
            <person name="Bastone P."/>
            <person name="Muckenfuss H."/>
            <person name="Kirchner N."/>
            <person name="Kim Y.B."/>
            <person name="Truyen U."/>
            <person name="Rosler U."/>
            <person name="Battenberg M."/>
            <person name="Saib A."/>
            <person name="Flory E."/>
            <person name="Cichutek K."/>
            <person name="Muenk C."/>
        </authorList>
    </citation>
    <scope>INTERACTION WITH FELINE APOBEC3CA</scope>
</reference>
<evidence type="ECO:0000256" key="1">
    <source>
        <dbReference type="SAM" id="MobiDB-lite"/>
    </source>
</evidence>
<evidence type="ECO:0000269" key="2">
    <source>
    </source>
</evidence>
<evidence type="ECO:0000269" key="3">
    <source>
    </source>
</evidence>
<evidence type="ECO:0000305" key="4"/>
<evidence type="ECO:0000305" key="5">
    <source>
    </source>
</evidence>
<gene>
    <name type="primary">bet</name>
</gene>
<organismHost>
    <name type="scientific">Felis catus</name>
    <name type="common">Cat</name>
    <name type="synonym">Felis silvestris catus</name>
    <dbReference type="NCBI Taxonomy" id="9685"/>
</organismHost>
<organism>
    <name type="scientific">Feline foamy virus</name>
    <name type="common">FFV</name>
    <name type="synonym">Feline syncytial virus</name>
    <dbReference type="NCBI Taxonomy" id="53182"/>
    <lineage>
        <taxon>Viruses</taxon>
        <taxon>Riboviria</taxon>
        <taxon>Pararnavirae</taxon>
        <taxon>Artverviricota</taxon>
        <taxon>Revtraviricetes</taxon>
        <taxon>Ortervirales</taxon>
        <taxon>Retroviridae</taxon>
        <taxon>Spumaretrovirinae</taxon>
        <taxon>Felispumavirus</taxon>
    </lineage>
</organism>
<dbReference type="EMBL" id="Y08851">
    <property type="protein sequence ID" value="CAA70078.1"/>
    <property type="molecule type" value="Genomic_DNA"/>
</dbReference>
<dbReference type="EMBL" id="AJ223851">
    <property type="protein sequence ID" value="CAA11584.1"/>
    <property type="molecule type" value="Genomic_RNA"/>
</dbReference>
<dbReference type="RefSeq" id="NP_056916.1">
    <property type="nucleotide sequence ID" value="NC_001871.1"/>
</dbReference>
<dbReference type="Proteomes" id="UP000008763">
    <property type="component" value="Genome"/>
</dbReference>
<dbReference type="Proteomes" id="UP000201849">
    <property type="component" value="Genome"/>
</dbReference>
<name>BET_FFV</name>
<proteinExistence type="evidence at protein level"/>